<organism>
    <name type="scientific">Burkholderia pseudomallei (strain 1106a)</name>
    <dbReference type="NCBI Taxonomy" id="357348"/>
    <lineage>
        <taxon>Bacteria</taxon>
        <taxon>Pseudomonadati</taxon>
        <taxon>Pseudomonadota</taxon>
        <taxon>Betaproteobacteria</taxon>
        <taxon>Burkholderiales</taxon>
        <taxon>Burkholderiaceae</taxon>
        <taxon>Burkholderia</taxon>
        <taxon>pseudomallei group</taxon>
    </lineage>
</organism>
<comment type="function">
    <text evidence="1">Catalyzes the NAD-dependent reduction of succinylglutamate semialdehyde into succinylglutamate.</text>
</comment>
<comment type="catalytic activity">
    <reaction evidence="1">
        <text>N-succinyl-L-glutamate 5-semialdehyde + NAD(+) + H2O = N-succinyl-L-glutamate + NADH + 2 H(+)</text>
        <dbReference type="Rhea" id="RHEA:10812"/>
        <dbReference type="ChEBI" id="CHEBI:15377"/>
        <dbReference type="ChEBI" id="CHEBI:15378"/>
        <dbReference type="ChEBI" id="CHEBI:57540"/>
        <dbReference type="ChEBI" id="CHEBI:57945"/>
        <dbReference type="ChEBI" id="CHEBI:58520"/>
        <dbReference type="ChEBI" id="CHEBI:58763"/>
        <dbReference type="EC" id="1.2.1.71"/>
    </reaction>
</comment>
<comment type="pathway">
    <text evidence="1">Amino-acid degradation; L-arginine degradation via AST pathway; L-glutamate and succinate from L-arginine: step 4/5.</text>
</comment>
<comment type="similarity">
    <text evidence="1">Belongs to the aldehyde dehydrogenase family. AstD subfamily.</text>
</comment>
<accession>A3NXG2</accession>
<evidence type="ECO:0000255" key="1">
    <source>
        <dbReference type="HAMAP-Rule" id="MF_01174"/>
    </source>
</evidence>
<protein>
    <recommendedName>
        <fullName evidence="1">N-succinylglutamate 5-semialdehyde dehydrogenase</fullName>
        <ecNumber evidence="1">1.2.1.71</ecNumber>
    </recommendedName>
    <alternativeName>
        <fullName evidence="1">Succinylglutamic semialdehyde dehydrogenase</fullName>
        <shortName evidence="1">SGSD</shortName>
    </alternativeName>
</protein>
<dbReference type="EC" id="1.2.1.71" evidence="1"/>
<dbReference type="EMBL" id="CP000572">
    <property type="protein sequence ID" value="ABN88804.1"/>
    <property type="molecule type" value="Genomic_DNA"/>
</dbReference>
<dbReference type="RefSeq" id="WP_004527437.1">
    <property type="nucleotide sequence ID" value="NC_009076.1"/>
</dbReference>
<dbReference type="SMR" id="A3NXG2"/>
<dbReference type="KEGG" id="bpl:BURPS1106A_2782"/>
<dbReference type="HOGENOM" id="CLU_005391_1_0_4"/>
<dbReference type="UniPathway" id="UPA00185">
    <property type="reaction ID" value="UER00282"/>
</dbReference>
<dbReference type="Proteomes" id="UP000006738">
    <property type="component" value="Chromosome I"/>
</dbReference>
<dbReference type="GO" id="GO:0043824">
    <property type="term" value="F:succinylglutamate-semialdehyde dehydrogenase activity"/>
    <property type="evidence" value="ECO:0007669"/>
    <property type="project" value="UniProtKB-EC"/>
</dbReference>
<dbReference type="GO" id="GO:0019544">
    <property type="term" value="P:arginine catabolic process to glutamate"/>
    <property type="evidence" value="ECO:0007669"/>
    <property type="project" value="UniProtKB-UniRule"/>
</dbReference>
<dbReference type="GO" id="GO:0019545">
    <property type="term" value="P:arginine catabolic process to succinate"/>
    <property type="evidence" value="ECO:0007669"/>
    <property type="project" value="UniProtKB-UniRule"/>
</dbReference>
<dbReference type="CDD" id="cd07095">
    <property type="entry name" value="ALDH_SGSD_AstD"/>
    <property type="match status" value="1"/>
</dbReference>
<dbReference type="FunFam" id="3.40.605.10:FF:000010">
    <property type="entry name" value="N-succinylglutamate 5-semialdehyde dehydrogenase"/>
    <property type="match status" value="1"/>
</dbReference>
<dbReference type="Gene3D" id="3.40.605.10">
    <property type="entry name" value="Aldehyde Dehydrogenase, Chain A, domain 1"/>
    <property type="match status" value="1"/>
</dbReference>
<dbReference type="Gene3D" id="3.40.309.10">
    <property type="entry name" value="Aldehyde Dehydrogenase, Chain A, domain 2"/>
    <property type="match status" value="1"/>
</dbReference>
<dbReference type="HAMAP" id="MF_01174">
    <property type="entry name" value="Aldedh_AstD"/>
    <property type="match status" value="1"/>
</dbReference>
<dbReference type="InterPro" id="IPR016161">
    <property type="entry name" value="Ald_DH/histidinol_DH"/>
</dbReference>
<dbReference type="InterPro" id="IPR016163">
    <property type="entry name" value="Ald_DH_C"/>
</dbReference>
<dbReference type="InterPro" id="IPR016160">
    <property type="entry name" value="Ald_DH_CS_CYS"/>
</dbReference>
<dbReference type="InterPro" id="IPR029510">
    <property type="entry name" value="Ald_DH_CS_GLU"/>
</dbReference>
<dbReference type="InterPro" id="IPR016162">
    <property type="entry name" value="Ald_DH_N"/>
</dbReference>
<dbReference type="InterPro" id="IPR015590">
    <property type="entry name" value="Aldehyde_DH_dom"/>
</dbReference>
<dbReference type="InterPro" id="IPR017649">
    <property type="entry name" value="SuccinylGlu_semiald_DH_AstD"/>
</dbReference>
<dbReference type="NCBIfam" id="TIGR03240">
    <property type="entry name" value="arg_catab_astD"/>
    <property type="match status" value="1"/>
</dbReference>
<dbReference type="NCBIfam" id="NF006992">
    <property type="entry name" value="PRK09457.1"/>
    <property type="match status" value="1"/>
</dbReference>
<dbReference type="PANTHER" id="PTHR11699">
    <property type="entry name" value="ALDEHYDE DEHYDROGENASE-RELATED"/>
    <property type="match status" value="1"/>
</dbReference>
<dbReference type="Pfam" id="PF00171">
    <property type="entry name" value="Aldedh"/>
    <property type="match status" value="1"/>
</dbReference>
<dbReference type="SUPFAM" id="SSF53720">
    <property type="entry name" value="ALDH-like"/>
    <property type="match status" value="1"/>
</dbReference>
<dbReference type="PROSITE" id="PS00070">
    <property type="entry name" value="ALDEHYDE_DEHYDR_CYS"/>
    <property type="match status" value="1"/>
</dbReference>
<dbReference type="PROSITE" id="PS00687">
    <property type="entry name" value="ALDEHYDE_DEHYDR_GLU"/>
    <property type="match status" value="1"/>
</dbReference>
<gene>
    <name evidence="1" type="primary">astD</name>
    <name type="ordered locus">BURPS1106A_2782</name>
</gene>
<sequence length="487" mass="51839">MTELFIDGAWRDGAGPVFASRNPGTGEPVWEGAGASADDVERAVASARRAFAAWSALDLDARCAIVKRFAALLVERKEALATMIGRETGKPLWEARTEVASMAAKVDVSIAAYHERTGERRSPTADGVAVLRHRPHGVVAVFGPYNFPGHLPNGHIVPALIAGNTVVFKPSELAPGVARATVEIWRDAGLPAGVLNLVQGEKDTGVALANHRQIDGLFFTGSSDTGTLLHRQFGGRPEIVLALEMGGNNPLVVADVEDIDAAVHHAIQSAFLSAGQRCTCARRILVPRGAFGDRFLERFADVASRITADVYDADPQPFMGAVISARAASRLVAAQAKLLELGAAPIIEMRQRDPALGFVNASILDVTPVRELPDEEHFGPLAQIVRYTDLDDAIARANDTAFGLSAGLLADDETVWNTFRRAIRAGIVNWNRPTNGASSAAPFGGAGRSGNHRPSAYYAADYCAYPMASVESAQLQMPANLSPGLHF</sequence>
<reference key="1">
    <citation type="journal article" date="2010" name="Genome Biol. Evol.">
        <title>Continuing evolution of Burkholderia mallei through genome reduction and large-scale rearrangements.</title>
        <authorList>
            <person name="Losada L."/>
            <person name="Ronning C.M."/>
            <person name="DeShazer D."/>
            <person name="Woods D."/>
            <person name="Fedorova N."/>
            <person name="Kim H.S."/>
            <person name="Shabalina S.A."/>
            <person name="Pearson T.R."/>
            <person name="Brinkac L."/>
            <person name="Tan P."/>
            <person name="Nandi T."/>
            <person name="Crabtree J."/>
            <person name="Badger J."/>
            <person name="Beckstrom-Sternberg S."/>
            <person name="Saqib M."/>
            <person name="Schutzer S.E."/>
            <person name="Keim P."/>
            <person name="Nierman W.C."/>
        </authorList>
    </citation>
    <scope>NUCLEOTIDE SEQUENCE [LARGE SCALE GENOMIC DNA]</scope>
    <source>
        <strain>1106a</strain>
    </source>
</reference>
<feature type="chain" id="PRO_1000065750" description="N-succinylglutamate 5-semialdehyde dehydrogenase">
    <location>
        <begin position="1"/>
        <end position="487"/>
    </location>
</feature>
<feature type="active site" evidence="1">
    <location>
        <position position="244"/>
    </location>
</feature>
<feature type="active site" evidence="1">
    <location>
        <position position="278"/>
    </location>
</feature>
<feature type="binding site" evidence="1">
    <location>
        <begin position="221"/>
        <end position="226"/>
    </location>
    <ligand>
        <name>NAD(+)</name>
        <dbReference type="ChEBI" id="CHEBI:57540"/>
    </ligand>
</feature>
<keyword id="KW-0056">Arginine metabolism</keyword>
<keyword id="KW-0520">NAD</keyword>
<keyword id="KW-0560">Oxidoreductase</keyword>
<proteinExistence type="inferred from homology"/>
<name>ASTD_BURP0</name>